<comment type="function">
    <text evidence="1">Binds directly to 16S ribosomal RNA.</text>
</comment>
<comment type="similarity">
    <text evidence="1">Belongs to the bacterial ribosomal protein bS20 family.</text>
</comment>
<keyword id="KW-0687">Ribonucleoprotein</keyword>
<keyword id="KW-0689">Ribosomal protein</keyword>
<keyword id="KW-0694">RNA-binding</keyword>
<keyword id="KW-0699">rRNA-binding</keyword>
<gene>
    <name evidence="1" type="primary">rpsT</name>
    <name type="ordered locus">AAur_2241</name>
</gene>
<evidence type="ECO:0000255" key="1">
    <source>
        <dbReference type="HAMAP-Rule" id="MF_00500"/>
    </source>
</evidence>
<evidence type="ECO:0000305" key="2"/>
<protein>
    <recommendedName>
        <fullName evidence="1">Small ribosomal subunit protein bS20</fullName>
    </recommendedName>
    <alternativeName>
        <fullName evidence="2">30S ribosomal protein S20</fullName>
    </alternativeName>
</protein>
<dbReference type="EMBL" id="CP000474">
    <property type="protein sequence ID" value="ABM09682.1"/>
    <property type="molecule type" value="Genomic_DNA"/>
</dbReference>
<dbReference type="RefSeq" id="WP_011774926.1">
    <property type="nucleotide sequence ID" value="NC_008711.1"/>
</dbReference>
<dbReference type="SMR" id="A1R6X0"/>
<dbReference type="STRING" id="290340.AAur_2241"/>
<dbReference type="GeneID" id="97301106"/>
<dbReference type="KEGG" id="aau:AAur_2241"/>
<dbReference type="eggNOG" id="COG0268">
    <property type="taxonomic scope" value="Bacteria"/>
</dbReference>
<dbReference type="HOGENOM" id="CLU_160655_0_1_11"/>
<dbReference type="OrthoDB" id="9807974at2"/>
<dbReference type="Proteomes" id="UP000000637">
    <property type="component" value="Chromosome"/>
</dbReference>
<dbReference type="GO" id="GO:0005829">
    <property type="term" value="C:cytosol"/>
    <property type="evidence" value="ECO:0007669"/>
    <property type="project" value="TreeGrafter"/>
</dbReference>
<dbReference type="GO" id="GO:0015935">
    <property type="term" value="C:small ribosomal subunit"/>
    <property type="evidence" value="ECO:0007669"/>
    <property type="project" value="TreeGrafter"/>
</dbReference>
<dbReference type="GO" id="GO:0070181">
    <property type="term" value="F:small ribosomal subunit rRNA binding"/>
    <property type="evidence" value="ECO:0007669"/>
    <property type="project" value="TreeGrafter"/>
</dbReference>
<dbReference type="GO" id="GO:0003735">
    <property type="term" value="F:structural constituent of ribosome"/>
    <property type="evidence" value="ECO:0007669"/>
    <property type="project" value="InterPro"/>
</dbReference>
<dbReference type="GO" id="GO:0006412">
    <property type="term" value="P:translation"/>
    <property type="evidence" value="ECO:0007669"/>
    <property type="project" value="UniProtKB-UniRule"/>
</dbReference>
<dbReference type="FunFam" id="1.20.58.110:FF:000001">
    <property type="entry name" value="30S ribosomal protein S20"/>
    <property type="match status" value="1"/>
</dbReference>
<dbReference type="Gene3D" id="1.20.58.110">
    <property type="entry name" value="Ribosomal protein S20"/>
    <property type="match status" value="1"/>
</dbReference>
<dbReference type="HAMAP" id="MF_00500">
    <property type="entry name" value="Ribosomal_bS20"/>
    <property type="match status" value="1"/>
</dbReference>
<dbReference type="InterPro" id="IPR002583">
    <property type="entry name" value="Ribosomal_bS20"/>
</dbReference>
<dbReference type="InterPro" id="IPR036510">
    <property type="entry name" value="Ribosomal_bS20_sf"/>
</dbReference>
<dbReference type="NCBIfam" id="TIGR00029">
    <property type="entry name" value="S20"/>
    <property type="match status" value="1"/>
</dbReference>
<dbReference type="PANTHER" id="PTHR33398">
    <property type="entry name" value="30S RIBOSOMAL PROTEIN S20"/>
    <property type="match status" value="1"/>
</dbReference>
<dbReference type="PANTHER" id="PTHR33398:SF1">
    <property type="entry name" value="SMALL RIBOSOMAL SUBUNIT PROTEIN BS20C"/>
    <property type="match status" value="1"/>
</dbReference>
<dbReference type="Pfam" id="PF01649">
    <property type="entry name" value="Ribosomal_S20p"/>
    <property type="match status" value="1"/>
</dbReference>
<dbReference type="SUPFAM" id="SSF46992">
    <property type="entry name" value="Ribosomal protein S20"/>
    <property type="match status" value="1"/>
</dbReference>
<sequence length="86" mass="9181">MANIKSQKKRILTNEKARLRNNAVKSELKTAIRAVNTAVESADKDAAGTALVAASRKLDKAVSKGVIHKNNAANRKSAISKKVNAL</sequence>
<feature type="chain" id="PRO_1000014545" description="Small ribosomal subunit protein bS20">
    <location>
        <begin position="1"/>
        <end position="86"/>
    </location>
</feature>
<organism>
    <name type="scientific">Paenarthrobacter aurescens (strain TC1)</name>
    <dbReference type="NCBI Taxonomy" id="290340"/>
    <lineage>
        <taxon>Bacteria</taxon>
        <taxon>Bacillati</taxon>
        <taxon>Actinomycetota</taxon>
        <taxon>Actinomycetes</taxon>
        <taxon>Micrococcales</taxon>
        <taxon>Micrococcaceae</taxon>
        <taxon>Paenarthrobacter</taxon>
    </lineage>
</organism>
<proteinExistence type="inferred from homology"/>
<reference key="1">
    <citation type="journal article" date="2006" name="PLoS Genet.">
        <title>Secrets of soil survival revealed by the genome sequence of Arthrobacter aurescens TC1.</title>
        <authorList>
            <person name="Mongodin E.F."/>
            <person name="Shapir N."/>
            <person name="Daugherty S.C."/>
            <person name="DeBoy R.T."/>
            <person name="Emerson J.B."/>
            <person name="Shvartzbeyn A."/>
            <person name="Radune D."/>
            <person name="Vamathevan J."/>
            <person name="Riggs F."/>
            <person name="Grinberg V."/>
            <person name="Khouri H.M."/>
            <person name="Wackett L.P."/>
            <person name="Nelson K.E."/>
            <person name="Sadowsky M.J."/>
        </authorList>
    </citation>
    <scope>NUCLEOTIDE SEQUENCE [LARGE SCALE GENOMIC DNA]</scope>
    <source>
        <strain>TC1</strain>
    </source>
</reference>
<name>RS20_PAEAT</name>
<accession>A1R6X0</accession>